<proteinExistence type="evidence at protein level"/>
<sequence length="608" mass="68659">MKWVTFISLLLLFSSAYSRGVTRREAHQSEIAHRFNDLGEEHFRGLVLVAFSQYLQQCPFEDHVKLVNEVTEFAKGCVADQSAANCEKSLHELLGDKLCTVASLRDKYGEMADCCEKKEPERNECFLQHKDDNPGFGQLVTPEADAMCTAFHENEQRFLGKYLYEIARRHPYFYAPELLYYAEEYKGVFTECCEAADKAACLTPKVDALREKVLASSAKERLKCASLQKFGERAFKAWSVARLSQKFPKAEFAEISKLVTDLAKIHKECCHGDLLECADDRADLAKYICENQDSISTKLKECCGKPVLEKSHCISEVERDELPADLPPLAVDFVEDKEVCKNYQEAKDVFLGTFLYEYSRRHPEYSVSLLLRLAKEYEATLEKCCATDDPPACYAHVFDEFKPLVEEPHNLVKTNCELFEKLGEYGFQNALLVRYTKKVPQVSTPTLVEVSRSLGKVGSKCCTHPEAERLSCAEDYLSVVLNRLCVLHEKTPVSERVTKCCTESLVNRRPCFSALQVDETYVPKEFSAETFTFHADLCTLPEAEKQIKKQSALVELLKHKPKATEEQLKTVMGDFGSFVDKCCAAEDKEACFAEEGPKLVAAAQAALA</sequence>
<organism>
    <name type="scientific">Felis catus</name>
    <name type="common">Cat</name>
    <name type="synonym">Felis silvestris catus</name>
    <dbReference type="NCBI Taxonomy" id="9685"/>
    <lineage>
        <taxon>Eukaryota</taxon>
        <taxon>Metazoa</taxon>
        <taxon>Chordata</taxon>
        <taxon>Craniata</taxon>
        <taxon>Vertebrata</taxon>
        <taxon>Euteleostomi</taxon>
        <taxon>Mammalia</taxon>
        <taxon>Eutheria</taxon>
        <taxon>Laurasiatheria</taxon>
        <taxon>Carnivora</taxon>
        <taxon>Feliformia</taxon>
        <taxon>Felidae</taxon>
        <taxon>Felinae</taxon>
        <taxon>Felis</taxon>
    </lineage>
</organism>
<reference key="1">
    <citation type="journal article" date="1996" name="Gene">
        <title>Sequence of the gene encoding cat (Felis domesticus) serum albumin.</title>
        <authorList>
            <person name="Hilger C."/>
            <person name="Grigioni F."/>
            <person name="Kohnen M."/>
            <person name="Hentges F."/>
        </authorList>
    </citation>
    <scope>NUCLEOTIDE SEQUENCE [MRNA]</scope>
</reference>
<reference key="2">
    <citation type="submission" date="2002-05" db="EMBL/GenBank/DDBJ databases">
        <title>Escherichia coli expression and purification of recombinant cat albumin:IgE recognition, induction of basophil activation and lymphoproliferative responses in atopic patients.</title>
        <authorList>
            <person name="Reininger R."/>
            <person name="Swoboda I."/>
            <person name="Bohle B."/>
            <person name="Hauswirth A.W."/>
            <person name="Valent P."/>
            <person name="Rumpold H."/>
            <person name="Valenta R."/>
            <person name="Spitzauer S."/>
        </authorList>
    </citation>
    <scope>NUCLEOTIDE SEQUENCE [MRNA] OF 25-608</scope>
    <source>
        <tissue>Liver</tissue>
    </source>
</reference>
<gene>
    <name type="primary">ALB</name>
</gene>
<accession>P49064</accession>
<accession>Q7YSG3</accession>
<dbReference type="EMBL" id="X84842">
    <property type="protein sequence ID" value="CAA59279.1"/>
    <property type="molecule type" value="mRNA"/>
</dbReference>
<dbReference type="EMBL" id="AJ487677">
    <property type="protein sequence ID" value="CAD32275.1"/>
    <property type="molecule type" value="mRNA"/>
</dbReference>
<dbReference type="PIR" id="JC4660">
    <property type="entry name" value="S57632"/>
</dbReference>
<dbReference type="RefSeq" id="NP_001009961.1">
    <property type="nucleotide sequence ID" value="NM_001009961.2"/>
</dbReference>
<dbReference type="PDB" id="5YXE">
    <property type="method" value="X-ray"/>
    <property type="resolution" value="3.40 A"/>
    <property type="chains" value="A=25-608"/>
</dbReference>
<dbReference type="PDBsum" id="5YXE"/>
<dbReference type="SMR" id="P49064"/>
<dbReference type="FunCoup" id="P49064">
    <property type="interactions" value="3"/>
</dbReference>
<dbReference type="STRING" id="9685.ENSFCAP00000028536"/>
<dbReference type="Allergome" id="3279">
    <property type="allergen name" value="Fel d 2.0101"/>
</dbReference>
<dbReference type="Allergome" id="346">
    <property type="allergen name" value="Fel d 2"/>
</dbReference>
<dbReference type="PaxDb" id="9685-ENSFCAP00000011000"/>
<dbReference type="GeneID" id="448843"/>
<dbReference type="KEGG" id="fca:448843"/>
<dbReference type="CTD" id="213"/>
<dbReference type="eggNOG" id="ENOG502R7EA">
    <property type="taxonomic scope" value="Eukaryota"/>
</dbReference>
<dbReference type="InParanoid" id="P49064"/>
<dbReference type="OrthoDB" id="9875082at2759"/>
<dbReference type="Proteomes" id="UP000011712">
    <property type="component" value="Unplaced"/>
</dbReference>
<dbReference type="GO" id="GO:0005737">
    <property type="term" value="C:cytoplasm"/>
    <property type="evidence" value="ECO:0000318"/>
    <property type="project" value="GO_Central"/>
</dbReference>
<dbReference type="GO" id="GO:0005615">
    <property type="term" value="C:extracellular space"/>
    <property type="evidence" value="ECO:0007669"/>
    <property type="project" value="InterPro"/>
</dbReference>
<dbReference type="GO" id="GO:0032991">
    <property type="term" value="C:protein-containing complex"/>
    <property type="evidence" value="ECO:0000250"/>
    <property type="project" value="UniProtKB"/>
</dbReference>
<dbReference type="GO" id="GO:0003677">
    <property type="term" value="F:DNA binding"/>
    <property type="evidence" value="ECO:0000250"/>
    <property type="project" value="UniProtKB"/>
</dbReference>
<dbReference type="GO" id="GO:1903981">
    <property type="term" value="F:enterobactin binding"/>
    <property type="evidence" value="ECO:0000250"/>
    <property type="project" value="UniProtKB"/>
</dbReference>
<dbReference type="GO" id="GO:0005504">
    <property type="term" value="F:fatty acid binding"/>
    <property type="evidence" value="ECO:0000250"/>
    <property type="project" value="UniProtKB"/>
</dbReference>
<dbReference type="GO" id="GO:0046872">
    <property type="term" value="F:metal ion binding"/>
    <property type="evidence" value="ECO:0007669"/>
    <property type="project" value="UniProtKB-KW"/>
</dbReference>
<dbReference type="GO" id="GO:0030170">
    <property type="term" value="F:pyridoxal phosphate binding"/>
    <property type="evidence" value="ECO:0000250"/>
    <property type="project" value="UniProtKB"/>
</dbReference>
<dbReference type="GO" id="GO:0015643">
    <property type="term" value="F:toxic substance binding"/>
    <property type="evidence" value="ECO:0000250"/>
    <property type="project" value="UniProtKB"/>
</dbReference>
<dbReference type="GO" id="GO:0072732">
    <property type="term" value="P:cellular response to calcium ion starvation"/>
    <property type="evidence" value="ECO:0000250"/>
    <property type="project" value="UniProtKB"/>
</dbReference>
<dbReference type="GO" id="GO:0009267">
    <property type="term" value="P:cellular response to starvation"/>
    <property type="evidence" value="ECO:0000250"/>
    <property type="project" value="UniProtKB"/>
</dbReference>
<dbReference type="GO" id="GO:0051902">
    <property type="term" value="P:negative regulation of mitochondrial depolarization"/>
    <property type="evidence" value="ECO:0000250"/>
    <property type="project" value="UniProtKB"/>
</dbReference>
<dbReference type="CDD" id="cd00015">
    <property type="entry name" value="ALBUMIN"/>
    <property type="match status" value="3"/>
</dbReference>
<dbReference type="FunFam" id="1.10.246.10:FF:000001">
    <property type="entry name" value="Serum albumin"/>
    <property type="match status" value="2"/>
</dbReference>
<dbReference type="FunFam" id="1.10.246.10:FF:000002">
    <property type="entry name" value="Serum albumin"/>
    <property type="match status" value="2"/>
</dbReference>
<dbReference type="FunFam" id="1.10.246.10:FF:000003">
    <property type="entry name" value="Serum albumin"/>
    <property type="match status" value="1"/>
</dbReference>
<dbReference type="FunFam" id="1.10.246.10:FF:000005">
    <property type="entry name" value="Serum albumin"/>
    <property type="match status" value="1"/>
</dbReference>
<dbReference type="Gene3D" id="1.10.246.10">
    <property type="match status" value="6"/>
</dbReference>
<dbReference type="InterPro" id="IPR000264">
    <property type="entry name" value="ALB/AFP/VDB"/>
</dbReference>
<dbReference type="InterPro" id="IPR020858">
    <property type="entry name" value="Serum_albumin-like"/>
</dbReference>
<dbReference type="InterPro" id="IPR021177">
    <property type="entry name" value="Serum_albumin/AFP/Afamin"/>
</dbReference>
<dbReference type="InterPro" id="IPR020857">
    <property type="entry name" value="Serum_albumin_CS"/>
</dbReference>
<dbReference type="InterPro" id="IPR014760">
    <property type="entry name" value="Serum_albumin_N"/>
</dbReference>
<dbReference type="PANTHER" id="PTHR11385:SF15">
    <property type="entry name" value="ALBUMIN"/>
    <property type="match status" value="1"/>
</dbReference>
<dbReference type="PANTHER" id="PTHR11385">
    <property type="entry name" value="SERUM ALBUMIN-RELATED"/>
    <property type="match status" value="1"/>
</dbReference>
<dbReference type="Pfam" id="PF00273">
    <property type="entry name" value="Serum_albumin"/>
    <property type="match status" value="3"/>
</dbReference>
<dbReference type="PIRSF" id="PIRSF002520">
    <property type="entry name" value="Serum_albumin_subgroup"/>
    <property type="match status" value="1"/>
</dbReference>
<dbReference type="PRINTS" id="PR00802">
    <property type="entry name" value="SERUMALBUMIN"/>
</dbReference>
<dbReference type="SMART" id="SM00103">
    <property type="entry name" value="ALBUMIN"/>
    <property type="match status" value="3"/>
</dbReference>
<dbReference type="SUPFAM" id="SSF48552">
    <property type="entry name" value="Serum albumin-like"/>
    <property type="match status" value="3"/>
</dbReference>
<dbReference type="PROSITE" id="PS00212">
    <property type="entry name" value="ALBUMIN_1"/>
    <property type="match status" value="3"/>
</dbReference>
<dbReference type="PROSITE" id="PS51438">
    <property type="entry name" value="ALBUMIN_2"/>
    <property type="match status" value="3"/>
</dbReference>
<keyword id="KW-0002">3D-structure</keyword>
<keyword id="KW-0020">Allergen</keyword>
<keyword id="KW-0106">Calcium</keyword>
<keyword id="KW-0165">Cleavage on pair of basic residues</keyword>
<keyword id="KW-0186">Copper</keyword>
<keyword id="KW-1015">Disulfide bond</keyword>
<keyword id="KW-0446">Lipid-binding</keyword>
<keyword id="KW-0479">Metal-binding</keyword>
<keyword id="KW-0488">Methylation</keyword>
<keyword id="KW-0597">Phosphoprotein</keyword>
<keyword id="KW-1185">Reference proteome</keyword>
<keyword id="KW-0677">Repeat</keyword>
<keyword id="KW-0964">Secreted</keyword>
<keyword id="KW-0732">Signal</keyword>
<keyword id="KW-0862">Zinc</keyword>
<protein>
    <recommendedName>
        <fullName>Albumin</fullName>
    </recommendedName>
    <allergenName>Fel d 2</allergenName>
</protein>
<feature type="signal peptide" evidence="5">
    <location>
        <begin position="1"/>
        <end position="18"/>
    </location>
</feature>
<feature type="propeptide" id="PRO_0000001063" evidence="3">
    <location>
        <begin position="19"/>
        <end position="24"/>
    </location>
</feature>
<feature type="chain" id="PRO_0000001064" description="Albumin">
    <location>
        <begin position="25"/>
        <end position="608"/>
    </location>
</feature>
<feature type="domain" description="Albumin 1" evidence="6">
    <location>
        <begin position="19"/>
        <end position="210"/>
    </location>
</feature>
<feature type="domain" description="Albumin 2" evidence="6">
    <location>
        <begin position="211"/>
        <end position="403"/>
    </location>
</feature>
<feature type="domain" description="Albumin 3" evidence="6">
    <location>
        <begin position="404"/>
        <end position="601"/>
    </location>
</feature>
<feature type="binding site" evidence="3">
    <location>
        <position position="27"/>
    </location>
    <ligand>
        <name>Cu cation</name>
        <dbReference type="ChEBI" id="CHEBI:23378"/>
    </ligand>
</feature>
<feature type="binding site" evidence="2">
    <location>
        <position position="30"/>
    </location>
    <ligand>
        <name>Ca(2+)</name>
        <dbReference type="ChEBI" id="CHEBI:29108"/>
        <label>1</label>
    </ligand>
</feature>
<feature type="binding site" evidence="2">
    <location>
        <position position="37"/>
    </location>
    <ligand>
        <name>Ca(2+)</name>
        <dbReference type="ChEBI" id="CHEBI:29108"/>
        <label>2</label>
    </ligand>
</feature>
<feature type="binding site" evidence="1">
    <location>
        <position position="91"/>
    </location>
    <ligand>
        <name>Zn(2+)</name>
        <dbReference type="ChEBI" id="CHEBI:29105"/>
    </ligand>
</feature>
<feature type="binding site" evidence="2">
    <location>
        <position position="268"/>
    </location>
    <ligand>
        <name>Ca(2+)</name>
        <dbReference type="ChEBI" id="CHEBI:29108"/>
        <label>1</label>
    </ligand>
</feature>
<feature type="binding site" evidence="1">
    <location>
        <position position="271"/>
    </location>
    <ligand>
        <name>Zn(2+)</name>
        <dbReference type="ChEBI" id="CHEBI:29105"/>
    </ligand>
</feature>
<feature type="binding site" evidence="2">
    <location>
        <position position="273"/>
    </location>
    <ligand>
        <name>Ca(2+)</name>
        <dbReference type="ChEBI" id="CHEBI:29108"/>
        <label>1</label>
    </ligand>
</feature>
<feature type="binding site" evidence="1">
    <location>
        <position position="273"/>
    </location>
    <ligand>
        <name>Zn(2+)</name>
        <dbReference type="ChEBI" id="CHEBI:29105"/>
    </ligand>
</feature>
<feature type="binding site" evidence="2">
    <location>
        <position position="276"/>
    </location>
    <ligand>
        <name>Ca(2+)</name>
        <dbReference type="ChEBI" id="CHEBI:29108"/>
        <label>1</label>
    </ligand>
</feature>
<feature type="binding site" evidence="2">
    <location>
        <position position="279"/>
    </location>
    <ligand>
        <name>Ca(2+)</name>
        <dbReference type="ChEBI" id="CHEBI:29108"/>
        <label>2</label>
    </ligand>
</feature>
<feature type="binding site" evidence="2">
    <location>
        <position position="283"/>
    </location>
    <ligand>
        <name>Ca(2+)</name>
        <dbReference type="ChEBI" id="CHEBI:29108"/>
        <label>2</label>
    </ligand>
</feature>
<feature type="modified residue" description="Phosphoserine" evidence="1">
    <location>
        <position position="29"/>
    </location>
</feature>
<feature type="modified residue" description="Phosphoserine" evidence="1">
    <location>
        <position position="82"/>
    </location>
</feature>
<feature type="modified residue" description="Phosphoserine" evidence="1">
    <location>
        <position position="89"/>
    </location>
</feature>
<feature type="modified residue" description="N6-succinyllysine" evidence="4">
    <location>
        <position position="229"/>
    </location>
</feature>
<feature type="modified residue" description="Phosphoserine" evidence="1">
    <location>
        <position position="443"/>
    </location>
</feature>
<feature type="modified residue" description="Phosphothreonine" evidence="1">
    <location>
        <position position="444"/>
    </location>
</feature>
<feature type="modified residue" description="Phosphothreonine" evidence="1">
    <location>
        <position position="446"/>
    </location>
</feature>
<feature type="modified residue" description="N6-succinyllysine" evidence="4">
    <location>
        <position position="460"/>
    </location>
</feature>
<feature type="modified residue" description="Phosphoserine" evidence="1">
    <location>
        <position position="513"/>
    </location>
</feature>
<feature type="modified residue" description="N6-methyllysine" evidence="1">
    <location>
        <position position="558"/>
    </location>
</feature>
<feature type="modified residue" description="Phosphothreonine" evidence="3">
    <location>
        <position position="570"/>
    </location>
</feature>
<feature type="modified residue" description="N6-succinyllysine" evidence="4">
    <location>
        <position position="588"/>
    </location>
</feature>
<feature type="disulfide bond" evidence="6">
    <location>
        <begin position="77"/>
        <end position="86"/>
    </location>
</feature>
<feature type="disulfide bond" evidence="6">
    <location>
        <begin position="99"/>
        <end position="115"/>
    </location>
</feature>
<feature type="disulfide bond" evidence="6">
    <location>
        <begin position="114"/>
        <end position="125"/>
    </location>
</feature>
<feature type="disulfide bond" evidence="6">
    <location>
        <begin position="148"/>
        <end position="193"/>
    </location>
</feature>
<feature type="disulfide bond" evidence="6">
    <location>
        <begin position="192"/>
        <end position="201"/>
    </location>
</feature>
<feature type="disulfide bond" evidence="6">
    <location>
        <begin position="224"/>
        <end position="270"/>
    </location>
</feature>
<feature type="disulfide bond" evidence="6">
    <location>
        <begin position="269"/>
        <end position="277"/>
    </location>
</feature>
<feature type="disulfide bond" evidence="6">
    <location>
        <begin position="289"/>
        <end position="303"/>
    </location>
</feature>
<feature type="disulfide bond" evidence="6">
    <location>
        <begin position="302"/>
        <end position="313"/>
    </location>
</feature>
<feature type="disulfide bond" evidence="6">
    <location>
        <begin position="340"/>
        <end position="385"/>
    </location>
</feature>
<feature type="disulfide bond" evidence="6">
    <location>
        <begin position="384"/>
        <end position="393"/>
    </location>
</feature>
<feature type="disulfide bond" evidence="6">
    <location>
        <begin position="416"/>
        <end position="462"/>
    </location>
</feature>
<feature type="disulfide bond" evidence="6">
    <location>
        <begin position="461"/>
        <end position="472"/>
    </location>
</feature>
<feature type="disulfide bond" evidence="6">
    <location>
        <begin position="485"/>
        <end position="501"/>
    </location>
</feature>
<feature type="disulfide bond" evidence="6">
    <location>
        <begin position="500"/>
        <end position="511"/>
    </location>
</feature>
<feature type="disulfide bond" evidence="6">
    <location>
        <begin position="538"/>
        <end position="583"/>
    </location>
</feature>
<feature type="disulfide bond" evidence="6">
    <location>
        <begin position="582"/>
        <end position="591"/>
    </location>
</feature>
<feature type="sequence conflict" description="In Ref. 2; CAD32275." evidence="7" ref="2">
    <original>K</original>
    <variation>N</variation>
    <location>
        <position position="75"/>
    </location>
</feature>
<feature type="sequence conflict" description="In Ref. 2; CAD32275." evidence="7" ref="2">
    <original>L</original>
    <variation>F</variation>
    <location>
        <position position="94"/>
    </location>
</feature>
<feature type="sequence conflict" description="In Ref. 2; CAD32275." evidence="7" ref="2">
    <original>K</original>
    <variation>R</variation>
    <location>
        <position position="186"/>
    </location>
</feature>
<feature type="sequence conflict" description="In Ref. 2; CAD32275." evidence="7" ref="2">
    <original>E</original>
    <variation>D</variation>
    <location>
        <position position="251"/>
    </location>
</feature>
<feature type="sequence conflict" description="In Ref. 2; CAD32275." evidence="7" ref="2">
    <original>A</original>
    <variation>E</variation>
    <location>
        <position position="282"/>
    </location>
</feature>
<feature type="sequence conflict" description="In Ref. 2; CAD32275." evidence="7" ref="2">
    <original>V</original>
    <variation>A</variation>
    <location>
        <position position="331"/>
    </location>
</feature>
<feature type="helix" evidence="8">
    <location>
        <begin position="30"/>
        <end position="38"/>
    </location>
</feature>
<feature type="helix" evidence="8">
    <location>
        <begin position="40"/>
        <end position="54"/>
    </location>
</feature>
<feature type="strand" evidence="8">
    <location>
        <begin position="56"/>
        <end position="58"/>
    </location>
</feature>
<feature type="helix" evidence="8">
    <location>
        <begin position="60"/>
        <end position="79"/>
    </location>
</feature>
<feature type="helix" evidence="8">
    <location>
        <begin position="85"/>
        <end position="87"/>
    </location>
</feature>
<feature type="helix" evidence="8">
    <location>
        <begin position="90"/>
        <end position="98"/>
    </location>
</feature>
<feature type="turn" evidence="8">
    <location>
        <begin position="99"/>
        <end position="103"/>
    </location>
</feature>
<feature type="helix" evidence="8">
    <location>
        <begin position="114"/>
        <end position="116"/>
    </location>
</feature>
<feature type="helix" evidence="8">
    <location>
        <begin position="122"/>
        <end position="128"/>
    </location>
</feature>
<feature type="helix" evidence="8">
    <location>
        <begin position="144"/>
        <end position="153"/>
    </location>
</feature>
<feature type="helix" evidence="8">
    <location>
        <begin position="155"/>
        <end position="167"/>
    </location>
</feature>
<feature type="helix" evidence="8">
    <location>
        <begin position="175"/>
        <end position="192"/>
    </location>
</feature>
<feature type="helix" evidence="8">
    <location>
        <begin position="198"/>
        <end position="229"/>
    </location>
</feature>
<feature type="helix" evidence="8">
    <location>
        <begin position="231"/>
        <end position="246"/>
    </location>
</feature>
<feature type="helix" evidence="8">
    <location>
        <begin position="252"/>
        <end position="270"/>
    </location>
</feature>
<feature type="helix" evidence="8">
    <location>
        <begin position="274"/>
        <end position="289"/>
    </location>
</feature>
<feature type="turn" evidence="8">
    <location>
        <begin position="293"/>
        <end position="295"/>
    </location>
</feature>
<feature type="turn" evidence="8">
    <location>
        <begin position="300"/>
        <end position="304"/>
    </location>
</feature>
<feature type="helix" evidence="8">
    <location>
        <begin position="307"/>
        <end position="315"/>
    </location>
</feature>
<feature type="helix" evidence="8">
    <location>
        <begin position="329"/>
        <end position="333"/>
    </location>
</feature>
<feature type="helix" evidence="8">
    <location>
        <begin position="339"/>
        <end position="345"/>
    </location>
</feature>
<feature type="helix" evidence="8">
    <location>
        <begin position="347"/>
        <end position="359"/>
    </location>
</feature>
<feature type="helix" evidence="8">
    <location>
        <begin position="367"/>
        <end position="384"/>
    </location>
</feature>
<feature type="helix" evidence="8">
    <location>
        <begin position="390"/>
        <end position="394"/>
    </location>
</feature>
<feature type="helix" evidence="8">
    <location>
        <begin position="397"/>
        <end position="438"/>
    </location>
</feature>
<feature type="helix" evidence="8">
    <location>
        <begin position="444"/>
        <end position="460"/>
    </location>
</feature>
<feature type="turn" evidence="8">
    <location>
        <begin position="461"/>
        <end position="463"/>
    </location>
</feature>
<feature type="helix" evidence="8">
    <location>
        <begin position="469"/>
        <end position="488"/>
    </location>
</feature>
<feature type="helix" evidence="8">
    <location>
        <begin position="495"/>
        <end position="502"/>
    </location>
</feature>
<feature type="helix" evidence="8">
    <location>
        <begin position="508"/>
        <end position="514"/>
    </location>
</feature>
<feature type="helix" evidence="8">
    <location>
        <begin position="535"/>
        <end position="539"/>
    </location>
</feature>
<feature type="helix" evidence="8">
    <location>
        <begin position="542"/>
        <end position="559"/>
    </location>
</feature>
<feature type="strand" evidence="8">
    <location>
        <begin position="561"/>
        <end position="563"/>
    </location>
</feature>
<feature type="helix" evidence="8">
    <location>
        <begin position="567"/>
        <end position="583"/>
    </location>
</feature>
<feature type="helix" evidence="8">
    <location>
        <begin position="591"/>
        <end position="605"/>
    </location>
</feature>
<evidence type="ECO:0000250" key="1">
    <source>
        <dbReference type="UniProtKB" id="P02768"/>
    </source>
</evidence>
<evidence type="ECO:0000250" key="2">
    <source>
        <dbReference type="UniProtKB" id="P02769"/>
    </source>
</evidence>
<evidence type="ECO:0000250" key="3">
    <source>
        <dbReference type="UniProtKB" id="P02770"/>
    </source>
</evidence>
<evidence type="ECO:0000250" key="4">
    <source>
        <dbReference type="UniProtKB" id="P07724"/>
    </source>
</evidence>
<evidence type="ECO:0000255" key="5"/>
<evidence type="ECO:0000255" key="6">
    <source>
        <dbReference type="PROSITE-ProRule" id="PRU00769"/>
    </source>
</evidence>
<evidence type="ECO:0000305" key="7"/>
<evidence type="ECO:0007829" key="8">
    <source>
        <dbReference type="PDB" id="5YXE"/>
    </source>
</evidence>
<name>ALBU_FELCA</name>
<comment type="function">
    <text evidence="1 2">Binds water, Ca(2+), Na(+), K(+), fatty acids, hormones, bilirubin and drugs. Its main function is the regulation of the colloidal osmotic pressure of blood. Major zinc transporter in plasma, typically binds about 80% of all plasma zinc (By similarity). Major calcium and magnesium transporter in plasma, binds approximately 45% of circulating calcium and magnesium in plasma (By similarity). Potentially has more than two calcium-binding sites and might additionally bind calcium in a non-specific manner (By similarity). The shared binding site between zinc and calcium at residue Asp-273 suggests a crosstalk between zinc and calcium transport in the blood (By similarity). The rank order of affinity is zinc &gt; calcium &gt; magnesium (By similarity). Binds to the bacterial siderophore enterobactin and inhibits enterobactin-mediated iron uptake of E.coli from ferric transferrin, and may thereby limit the utilization of iron and growth of enteric bacteria such as E.coli (By similarity). Does not prevent iron uptake by the bacterial siderophore aerobactin (By similarity).</text>
</comment>
<comment type="subunit">
    <text evidence="1 4">Interacts with FCGRT; this interaction regulates ALB homeostasis (By similarity). Interacts with TASOR (By similarity). In plasma, occurs in a covalently-linked complex with chromophore-bound alpha-1-microglobulin; this interaction does not prevent fatty acid binding to ALB.</text>
</comment>
<comment type="subcellular location">
    <subcellularLocation>
        <location>Secreted</location>
    </subcellularLocation>
</comment>
<comment type="tissue specificity">
    <text>Plasma.</text>
</comment>
<comment type="PTM">
    <text evidence="1">Phosphorylated by FAM20C in the extracellular medium.</text>
</comment>
<comment type="allergen">
    <text>Can cause allergic reactions in humans.</text>
</comment>
<comment type="similarity">
    <text evidence="6">Belongs to the ALB/AFP/VDB family.</text>
</comment>